<reference key="1">
    <citation type="journal article" date="1998" name="DNA Res.">
        <title>Structural analysis of Arabidopsis thaliana chromosome 5. VIII. Sequence features of the regions of 1,081,958 bp covered by seventeen physically assigned P1 and TAC clones.</title>
        <authorList>
            <person name="Asamizu E."/>
            <person name="Sato S."/>
            <person name="Kaneko T."/>
            <person name="Nakamura Y."/>
            <person name="Kotani H."/>
            <person name="Miyajima N."/>
            <person name="Tabata S."/>
        </authorList>
    </citation>
    <scope>NUCLEOTIDE SEQUENCE [LARGE SCALE GENOMIC DNA]</scope>
    <source>
        <strain>cv. Columbia</strain>
    </source>
</reference>
<reference key="2">
    <citation type="submission" date="1999-04" db="EMBL/GenBank/DDBJ databases">
        <title>Structural analysis of Arabidopsis thaliana chromosome 5. XI.</title>
        <authorList>
            <person name="Kaneko T."/>
            <person name="Katoh T."/>
            <person name="Asamizu E."/>
            <person name="Sato S."/>
            <person name="Nakamura Y."/>
            <person name="Kotani H."/>
            <person name="Tabata S."/>
        </authorList>
    </citation>
    <scope>NUCLEOTIDE SEQUENCE [LARGE SCALE GENOMIC DNA]</scope>
    <source>
        <strain>cv. Columbia</strain>
    </source>
</reference>
<reference key="3">
    <citation type="journal article" date="2017" name="Plant J.">
        <title>Araport11: a complete reannotation of the Arabidopsis thaliana reference genome.</title>
        <authorList>
            <person name="Cheng C.Y."/>
            <person name="Krishnakumar V."/>
            <person name="Chan A.P."/>
            <person name="Thibaud-Nissen F."/>
            <person name="Schobel S."/>
            <person name="Town C.D."/>
        </authorList>
    </citation>
    <scope>GENOME REANNOTATION</scope>
    <source>
        <strain>cv. Columbia</strain>
    </source>
</reference>
<reference key="4">
    <citation type="submission" date="2006-07" db="EMBL/GenBank/DDBJ databases">
        <title>Large-scale analysis of RIKEN Arabidopsis full-length (RAFL) cDNAs.</title>
        <authorList>
            <person name="Totoki Y."/>
            <person name="Seki M."/>
            <person name="Ishida J."/>
            <person name="Nakajima M."/>
            <person name="Enju A."/>
            <person name="Kamiya A."/>
            <person name="Narusaka M."/>
            <person name="Shin-i T."/>
            <person name="Nakagawa M."/>
            <person name="Sakamoto N."/>
            <person name="Oishi K."/>
            <person name="Kohara Y."/>
            <person name="Kobayashi M."/>
            <person name="Toyoda A."/>
            <person name="Sakaki Y."/>
            <person name="Sakurai T."/>
            <person name="Iida K."/>
            <person name="Akiyama K."/>
            <person name="Satou M."/>
            <person name="Toyoda T."/>
            <person name="Konagaya A."/>
            <person name="Carninci P."/>
            <person name="Kawai J."/>
            <person name="Hayashizaki Y."/>
            <person name="Shinozaki K."/>
        </authorList>
    </citation>
    <scope>NUCLEOTIDE SEQUENCE [LARGE SCALE MRNA] (ISOFORM 1)</scope>
    <source>
        <strain>cv. Columbia</strain>
    </source>
</reference>
<reference key="5">
    <citation type="journal article" date="2007" name="Mol. Cell. Proteomics">
        <title>Multidimensional protein identification technology (MudPIT) analysis of ubiquitinated proteins in plants.</title>
        <authorList>
            <person name="Maor R."/>
            <person name="Jones A."/>
            <person name="Nuehse T.S."/>
            <person name="Studholme D.J."/>
            <person name="Peck S.C."/>
            <person name="Shirasu K."/>
        </authorList>
    </citation>
    <scope>IDENTIFICATION BY MASS SPECTROMETRY [LARGE SCALE ANALYSIS]</scope>
</reference>
<reference key="6">
    <citation type="journal article" date="2008" name="J. Proteome Res.">
        <title>Site-specific phosphorylation profiling of Arabidopsis proteins by mass spectrometry and peptide chip analysis.</title>
        <authorList>
            <person name="de la Fuente van Bentem S."/>
            <person name="Anrather D."/>
            <person name="Dohnal I."/>
            <person name="Roitinger E."/>
            <person name="Csaszar E."/>
            <person name="Joore J."/>
            <person name="Buijnink J."/>
            <person name="Carreri A."/>
            <person name="Forzani C."/>
            <person name="Lorkovic Z.J."/>
            <person name="Barta A."/>
            <person name="Lecourieux D."/>
            <person name="Verhounig A."/>
            <person name="Jonak C."/>
            <person name="Hirt H."/>
        </authorList>
    </citation>
    <scope>IDENTIFICATION BY MASS SPECTROMETRY [LARGE SCALE ANALYSIS]</scope>
</reference>
<reference key="7">
    <citation type="journal article" date="2009" name="J. Proteomics">
        <title>Phosphoproteomic analysis of nuclei-enriched fractions from Arabidopsis thaliana.</title>
        <authorList>
            <person name="Jones A.M.E."/>
            <person name="MacLean D."/>
            <person name="Studholme D.J."/>
            <person name="Serna-Sanz A."/>
            <person name="Andreasson E."/>
            <person name="Rathjen J.P."/>
            <person name="Peck S.C."/>
        </authorList>
    </citation>
    <scope>PHOSPHORYLATION [LARGE SCALE ANALYSIS] AT SER-1584 AND THR-1588</scope>
    <scope>IDENTIFICATION BY MASS SPECTROMETRY [LARGE SCALE ANALYSIS]</scope>
</reference>
<reference key="8">
    <citation type="journal article" date="2009" name="Plant Physiol.">
        <title>Large-scale Arabidopsis phosphoproteome profiling reveals novel chloroplast kinase substrates and phosphorylation networks.</title>
        <authorList>
            <person name="Reiland S."/>
            <person name="Messerli G."/>
            <person name="Baerenfaller K."/>
            <person name="Gerrits B."/>
            <person name="Endler A."/>
            <person name="Grossmann J."/>
            <person name="Gruissem W."/>
            <person name="Baginsky S."/>
        </authorList>
    </citation>
    <scope>PHOSPHORYLATION [LARGE SCALE ANALYSIS] AT SER-1274; SER-1299; SER-1524; SER-1562 AND SER-1584</scope>
    <scope>IDENTIFICATION BY MASS SPECTROMETRY [LARGE SCALE ANALYSIS]</scope>
</reference>
<reference key="9">
    <citation type="journal article" date="2014" name="Plant Cell">
        <title>A DEK domain-containing protein modulates chromatin structure and function in Arabidopsis.</title>
        <authorList>
            <person name="Waidmann S."/>
            <person name="Kusenda B."/>
            <person name="Mayerhofer J."/>
            <person name="Mechtler K."/>
            <person name="Jonak C."/>
        </authorList>
    </citation>
    <scope>INTERACTION WITH DEK3</scope>
    <scope>IDENTIFICATION BY MASS SPECTROMETRY</scope>
    <source>
        <strain>cv. Columbia</strain>
    </source>
</reference>
<reference key="10">
    <citation type="journal article" date="2015" name="Front. Plant Sci.">
        <title>Involvement of the cohesin cofactor PDS5 (SPO76) during meiosis and DNA repair in Arabidopsis thaliana.</title>
        <authorList>
            <person name="Pradillo M."/>
            <person name="Knoll A."/>
            <person name="Oliver C."/>
            <person name="Varas J."/>
            <person name="Corredor E."/>
            <person name="Puchta H."/>
            <person name="Santos J.L."/>
        </authorList>
    </citation>
    <scope>FUNCTION</scope>
    <scope>DISRUPTION PHENOTYPE</scope>
    <source>
        <strain>cv. Columbia</strain>
    </source>
</reference>
<gene>
    <name evidence="8" type="primary">PDS5A</name>
    <name evidence="10" type="ordered locus">At5g47690</name>
    <name evidence="11" type="ORF">MNJ7.28</name>
</gene>
<protein>
    <recommendedName>
        <fullName evidence="9">Sister chromatid cohesion protein PDS5 homolog A</fullName>
    </recommendedName>
    <alternativeName>
        <fullName evidence="9">Precocious dissociation of sisters protein 5-A</fullName>
        <shortName evidence="8">AtPDS5A</shortName>
        <shortName evidence="7">PDS5</shortName>
    </alternativeName>
</protein>
<sequence>MAQKPEEQLKELGSKLDLAPVSKDSLLKLLKEAAVCLSELEQSPPPAVLKSIQPFLDAVIKPEILNHQDKDVKLLVASCVSEITRITAPEAPYSDNIMKDIFQLIVSAFAGLNDVSGPSFGRRVLILETVAKYRSCVVMLDLECDDLVKEVFTTFLDVARDDHPEIVFSSMQNIMIVLLEESEDVQEHLLLILLSKLGRNRSDVRDAARRLAMKVIEHCAPKVESDIKQFLISSMSGDSRFSSSQIDYHEVIYDLYRCAPQALSGVAPYLTGELLADKLETRLKVVGLVGELFSLPGRVISEEFDSIFLEFLKRLTDRVVEVRMAILDHIKDCLLSDPLRAEASQIISALCDRLLDYDENIRKQVVAVICDVSVSALTSIPVDTMKLVAERLRDKAILVKTYTMERLTELFRVYCLRCADGKVDTGDFNWIPGKILRCLYDKDFRSDTIEYILCSSLFPSDFSVRDKVKHWIQIFSGFDKVETKAFEKILEQRQRIQQEMQRYLSIKQTQQTADAPEIQKKILFGFRVMSRAFSDPPKTEQNFLILDQLKDANIWKILTNLLDPNTSITQASRIRDDMLKILSEKHSLYDFLSTLSIKCSYLLFSKEYVKEILAEVSVRKSSKNTLGIQPCMDFLGLLACFCPSLFDGAEEELISFLKDDDEMMKEGTLKILAKAGGTIRENLIVLASSVDLLLERICVEGNRKQAKYAVHALASITKDDGLKSLSVLYKRLVDMLEDKRYQPAVLQCLGCIAQIAMPVYETRESEVVEFIRSKILKLKSETVDDKKLSWDDKSEICQLKIYGIKTLVKSYLPFKDAQLRAGVDDLLGILKNILSFGEVSEDLESSSVDKAHLRLAAAKAVLRLSRHWDDKIPIEIFHLTLKTPEIPFPTAKKIFLGKVHQYVKDRVLEMKYACSFLFDITGSNVLESEEDKHNLADIIQHSYQTKVRKISAQTDANSVTLYPHHILPYLVHALAHHSCPDVEKCKDVKEYEMIYRQLYLIISMLLHKEEDGKTEDIDKEREYVPTIILIFHSIKQSEDVTDATKSKNSHAICELGLSIINHLTQKEPDLQGEITPVSLPPTLYKPSEKVEGDKSQVGEEKLWLADETVLLHFRALKLESHADASVIPQTSENEVMIDGESDGNEIPLGKIVERLRAQGTKTRKGKKNKSVPAEDENGKNDVDVLKMVREINLDHLQMLDKFESSNGHKHSPSERAEICQRDQKGNKRNVGDATSVVSVPKRRRSSSGHSPYKFSNSGPKVQLKASEDELHLESDMDKNVSLDSHDENSDQEKMLESISPRKRKKSLSSKLKITESDWALTDVERSRSAGGGDSKLKSASGSMKKRKNVSGLAKCSTKENKLVNDELIGCRIEVWWPMDKRFYEGTVKSYDSTKQRHVILYEDGDVEVLNLKKEQWELIDTGGKTAKKSRTSKGNSKKKRSSGSKPKNPDGVQRDEDPVTTTPKGKRTPKKNLKQLHPKDTPKSLSLEHEKVESRNKKRRSSALPKTEYSGEAGEEKSESEGKSLKEGEDDEEVVNKEEDLQEAKTESSGDAEGKEAEHDDSDTEGKQENNEMEREAEENAETSDNETLGAWKSKVGKSISRTAI</sequence>
<evidence type="ECO:0000250" key="1">
    <source>
        <dbReference type="UniProtKB" id="Q29RF7"/>
    </source>
</evidence>
<evidence type="ECO:0000255" key="2"/>
<evidence type="ECO:0000255" key="3">
    <source>
        <dbReference type="PROSITE-ProRule" id="PRU00768"/>
    </source>
</evidence>
<evidence type="ECO:0000256" key="4">
    <source>
        <dbReference type="SAM" id="MobiDB-lite"/>
    </source>
</evidence>
<evidence type="ECO:0000269" key="5">
    <source>
    </source>
</evidence>
<evidence type="ECO:0000269" key="6">
    <source>
    </source>
</evidence>
<evidence type="ECO:0000303" key="7">
    <source>
    </source>
</evidence>
<evidence type="ECO:0000303" key="8">
    <source>
    </source>
</evidence>
<evidence type="ECO:0000305" key="9"/>
<evidence type="ECO:0000312" key="10">
    <source>
        <dbReference type="Araport" id="AT5G47690"/>
    </source>
</evidence>
<evidence type="ECO:0000312" key="11">
    <source>
        <dbReference type="EMBL" id="BAB11316.1"/>
    </source>
</evidence>
<evidence type="ECO:0007744" key="12">
    <source>
    </source>
</evidence>
<evidence type="ECO:0007744" key="13">
    <source>
    </source>
</evidence>
<feature type="chain" id="PRO_0000453275" description="Sister chromatid cohesion protein PDS5 homolog A">
    <location>
        <begin position="1"/>
        <end position="1605"/>
    </location>
</feature>
<feature type="repeat" description="HEAT 1" evidence="2">
    <location>
        <begin position="50"/>
        <end position="89"/>
    </location>
</feature>
<feature type="repeat" description="HEAT 2" evidence="2">
    <location>
        <begin position="96"/>
        <end position="136"/>
    </location>
</feature>
<feature type="repeat" description="HEAT 3" evidence="2">
    <location>
        <begin position="146"/>
        <end position="183"/>
    </location>
</feature>
<feature type="repeat" description="HEAT 4" evidence="2">
    <location>
        <begin position="184"/>
        <end position="221"/>
    </location>
</feature>
<feature type="repeat" description="HEAT 5" evidence="2">
    <location>
        <begin position="261"/>
        <end position="298"/>
    </location>
</feature>
<feature type="repeat" description="HEAT 6" evidence="2">
    <location>
        <begin position="302"/>
        <end position="339"/>
    </location>
</feature>
<feature type="repeat" description="HEAT 7" evidence="2">
    <location>
        <begin position="341"/>
        <end position="378"/>
    </location>
</feature>
<feature type="repeat" description="HEAT 8" evidence="2">
    <location>
        <begin position="380"/>
        <end position="416"/>
    </location>
</feature>
<feature type="repeat" description="HEAT 9" evidence="2">
    <location>
        <begin position="552"/>
        <end position="591"/>
    </location>
</feature>
<feature type="repeat" description="HEAT 10" evidence="2">
    <location>
        <begin position="644"/>
        <end position="681"/>
    </location>
</feature>
<feature type="repeat" description="HEAT 11" evidence="2">
    <location>
        <begin position="723"/>
        <end position="758"/>
    </location>
</feature>
<feature type="repeat" description="HEAT 12" evidence="2">
    <location>
        <begin position="821"/>
        <end position="860"/>
    </location>
</feature>
<feature type="repeat" description="HEAT 13" evidence="2">
    <location>
        <begin position="961"/>
        <end position="1000"/>
    </location>
</feature>
<feature type="repeat" description="HEAT 14" evidence="2">
    <location>
        <begin position="1050"/>
        <end position="1088"/>
    </location>
</feature>
<feature type="region of interest" description="Disordered" evidence="4">
    <location>
        <begin position="1155"/>
        <end position="1182"/>
    </location>
</feature>
<feature type="region of interest" description="Disordered" evidence="4">
    <location>
        <begin position="1203"/>
        <end position="1262"/>
    </location>
</feature>
<feature type="region of interest" description="Disordered" evidence="4">
    <location>
        <begin position="1279"/>
        <end position="1307"/>
    </location>
</feature>
<feature type="region of interest" description="Disordered" evidence="4">
    <location>
        <begin position="1324"/>
        <end position="1353"/>
    </location>
</feature>
<feature type="region of interest" description="Disordered" evidence="4">
    <location>
        <begin position="1423"/>
        <end position="1605"/>
    </location>
</feature>
<feature type="short sequence motif" description="Nuclear localization signal 1" evidence="3">
    <location>
        <begin position="1226"/>
        <end position="1233"/>
    </location>
</feature>
<feature type="short sequence motif" description="Nuclear localization signal 2" evidence="3">
    <location>
        <begin position="1426"/>
        <end position="1433"/>
    </location>
</feature>
<feature type="compositionally biased region" description="Basic and acidic residues" evidence="4">
    <location>
        <begin position="1211"/>
        <end position="1225"/>
    </location>
</feature>
<feature type="compositionally biased region" description="Basic and acidic residues" evidence="4">
    <location>
        <begin position="1279"/>
        <end position="1295"/>
    </location>
</feature>
<feature type="compositionally biased region" description="Basic residues" evidence="4">
    <location>
        <begin position="1425"/>
        <end position="1442"/>
    </location>
</feature>
<feature type="compositionally biased region" description="Basic residues" evidence="4">
    <location>
        <begin position="1464"/>
        <end position="1476"/>
    </location>
</feature>
<feature type="compositionally biased region" description="Basic and acidic residues" evidence="4">
    <location>
        <begin position="1477"/>
        <end position="1495"/>
    </location>
</feature>
<feature type="compositionally biased region" description="Basic and acidic residues" evidence="4">
    <location>
        <begin position="1514"/>
        <end position="1527"/>
    </location>
</feature>
<feature type="compositionally biased region" description="Basic and acidic residues" evidence="4">
    <location>
        <begin position="1534"/>
        <end position="1574"/>
    </location>
</feature>
<feature type="compositionally biased region" description="Acidic residues" evidence="4">
    <location>
        <begin position="1575"/>
        <end position="1585"/>
    </location>
</feature>
<feature type="modified residue" description="Phosphoserine" evidence="13">
    <location>
        <position position="1274"/>
    </location>
</feature>
<feature type="modified residue" description="Phosphoserine" evidence="13">
    <location>
        <position position="1299"/>
    </location>
</feature>
<feature type="modified residue" description="Phosphoserine" evidence="13">
    <location>
        <position position="1524"/>
    </location>
</feature>
<feature type="modified residue" description="Phosphoserine" evidence="13">
    <location>
        <position position="1562"/>
    </location>
</feature>
<feature type="modified residue" description="Phosphoserine" evidence="12 13">
    <location>
        <position position="1584"/>
    </location>
</feature>
<feature type="modified residue" description="Phosphothreonine" evidence="12">
    <location>
        <position position="1588"/>
    </location>
</feature>
<feature type="splice variant" id="VSP_061116" description="In isoform 2.">
    <original>R</original>
    <variation>RQ</variation>
    <location>
        <position position="1325"/>
    </location>
</feature>
<feature type="splice variant" id="VSP_061117" description="In isoform 2.">
    <original>K</original>
    <variation>IE</variation>
    <location>
        <position position="1506"/>
    </location>
</feature>
<feature type="sequence conflict" description="In Ref. 4; BAF01282." evidence="9" ref="4">
    <original>E</original>
    <variation>G</variation>
    <location>
        <position position="183"/>
    </location>
</feature>
<feature type="sequence conflict" description="In Ref. 4; BAF01282." evidence="9" ref="4">
    <original>K</original>
    <variation>E</variation>
    <location>
        <position position="911"/>
    </location>
</feature>
<feature type="sequence conflict" description="In Ref. 4; BAF01282." evidence="9" ref="4">
    <original>K</original>
    <variation>R</variation>
    <location>
        <position position="1388"/>
    </location>
</feature>
<organism>
    <name type="scientific">Arabidopsis thaliana</name>
    <name type="common">Mouse-ear cress</name>
    <dbReference type="NCBI Taxonomy" id="3702"/>
    <lineage>
        <taxon>Eukaryota</taxon>
        <taxon>Viridiplantae</taxon>
        <taxon>Streptophyta</taxon>
        <taxon>Embryophyta</taxon>
        <taxon>Tracheophyta</taxon>
        <taxon>Spermatophyta</taxon>
        <taxon>Magnoliopsida</taxon>
        <taxon>eudicotyledons</taxon>
        <taxon>Gunneridae</taxon>
        <taxon>Pentapetalae</taxon>
        <taxon>rosids</taxon>
        <taxon>malvids</taxon>
        <taxon>Brassicales</taxon>
        <taxon>Brassicaceae</taxon>
        <taxon>Camelineae</taxon>
        <taxon>Arabidopsis</taxon>
    </lineage>
</organism>
<keyword id="KW-0025">Alternative splicing</keyword>
<keyword id="KW-0131">Cell cycle</keyword>
<keyword id="KW-0132">Cell division</keyword>
<keyword id="KW-0227">DNA damage</keyword>
<keyword id="KW-0234">DNA repair</keyword>
<keyword id="KW-0498">Mitosis</keyword>
<keyword id="KW-0539">Nucleus</keyword>
<keyword id="KW-0597">Phosphoprotein</keyword>
<keyword id="KW-1185">Reference proteome</keyword>
<keyword id="KW-0677">Repeat</keyword>
<comment type="function">
    <text evidence="1 6">Cohesin cofactor dispensable during the meiotic division but playing an important role in DNA repair by homologous recombination (HR) probably by helping SMC5/SMC6 complex (PubMed:26648949). Regulator of sister chromatid cohesion in mitosis which may stabilize cohesin complex association with chromatin (PubMed:26648949). May couple sister chromatid cohesion during mitosis to DNA replication (By similarity). Cohesion ensures that chromosome partitioning is accurate in both meiotic and mitotic cells and plays an important role in DNA repair (PubMed:26648949).</text>
</comment>
<comment type="subunit">
    <text evidence="1 5">Interacts with the cohesin complex (By similarity). Interacts with DEK3 (PubMed:25387881).</text>
</comment>
<comment type="subcellular location">
    <subcellularLocation>
        <location evidence="3">Nucleus</location>
    </subcellularLocation>
</comment>
<comment type="alternative products">
    <event type="alternative splicing"/>
    <isoform>
        <id>B6EUB3-1</id>
        <name>1</name>
        <sequence type="displayed"/>
    </isoform>
    <isoform>
        <id>B6EUB3-2</id>
        <name>2</name>
        <sequence type="described" ref="VSP_061116 VSP_061117"/>
    </isoform>
</comment>
<comment type="disruption phenotype">
    <text evidence="6">Weak impact on meiosis such as formation of some chromosome bridges at late anaphase I and telophase I in forming pollen, but severe effects on development, fertility, somatic homologous recombination (HR) and DNA repair, especially in plants lacking PDS5A, PDS5B, PDS5C, PDS5D and PDS5E.</text>
</comment>
<comment type="similarity">
    <text evidence="9">Belongs to the PDS5 family.</text>
</comment>
<comment type="sequence caution" evidence="9">
    <conflict type="erroneous gene model prediction">
        <sequence resource="EMBL-CDS" id="BAB11316"/>
    </conflict>
</comment>
<proteinExistence type="evidence at protein level"/>
<accession>B6EUB3</accession>
<accession>B3H5K3</accession>
<accession>Q0WNL7</accession>
<accession>Q9FIL0</accession>
<dbReference type="EMBL" id="AB016886">
    <property type="protein sequence ID" value="BAB11316.1"/>
    <property type="status" value="ALT_SEQ"/>
    <property type="molecule type" value="Genomic_DNA"/>
</dbReference>
<dbReference type="EMBL" id="AB025628">
    <property type="protein sequence ID" value="BAB11316.1"/>
    <property type="status" value="JOINED"/>
    <property type="molecule type" value="Genomic_DNA"/>
</dbReference>
<dbReference type="EMBL" id="AB028612">
    <property type="protein sequence ID" value="BAB11316.1"/>
    <property type="status" value="JOINED"/>
    <property type="molecule type" value="Genomic_DNA"/>
</dbReference>
<dbReference type="EMBL" id="CP002688">
    <property type="protein sequence ID" value="AED95551.1"/>
    <property type="molecule type" value="Genomic_DNA"/>
</dbReference>
<dbReference type="EMBL" id="CP002688">
    <property type="protein sequence ID" value="AED95553.1"/>
    <property type="molecule type" value="Genomic_DNA"/>
</dbReference>
<dbReference type="EMBL" id="AK229421">
    <property type="protein sequence ID" value="BAF01282.1"/>
    <property type="molecule type" value="mRNA"/>
</dbReference>
<dbReference type="RefSeq" id="NP_001119390.1">
    <molecule id="B6EUB3-2"/>
    <property type="nucleotide sequence ID" value="NM_001125918.2"/>
</dbReference>
<dbReference type="RefSeq" id="NP_199580.3">
    <molecule id="B6EUB3-1"/>
    <property type="nucleotide sequence ID" value="NM_124143.4"/>
</dbReference>
<dbReference type="SMR" id="B6EUB3"/>
<dbReference type="FunCoup" id="B6EUB3">
    <property type="interactions" value="4334"/>
</dbReference>
<dbReference type="IntAct" id="B6EUB3">
    <property type="interactions" value="1"/>
</dbReference>
<dbReference type="STRING" id="3702.B3H5K3"/>
<dbReference type="iPTMnet" id="B6EUB3"/>
<dbReference type="PaxDb" id="3702-AT5G47690.3"/>
<dbReference type="ProteomicsDB" id="200166"/>
<dbReference type="ProteomicsDB" id="206170"/>
<dbReference type="EnsemblPlants" id="AT5G47690.1">
    <molecule id="B6EUB3-1"/>
    <property type="protein sequence ID" value="AT5G47690.1"/>
    <property type="gene ID" value="AT5G47690"/>
</dbReference>
<dbReference type="EnsemblPlants" id="AT5G47690.3">
    <molecule id="B6EUB3-2"/>
    <property type="protein sequence ID" value="AT5G47690.3"/>
    <property type="gene ID" value="AT5G47690"/>
</dbReference>
<dbReference type="GeneID" id="834820"/>
<dbReference type="Gramene" id="AT5G47690.1">
    <molecule id="B6EUB3-1"/>
    <property type="protein sequence ID" value="AT5G47690.1"/>
    <property type="gene ID" value="AT5G47690"/>
</dbReference>
<dbReference type="Gramene" id="AT5G47690.3">
    <molecule id="B6EUB3-2"/>
    <property type="protein sequence ID" value="AT5G47690.3"/>
    <property type="gene ID" value="AT5G47690"/>
</dbReference>
<dbReference type="KEGG" id="ath:AT5G47690"/>
<dbReference type="Araport" id="AT5G47690"/>
<dbReference type="TAIR" id="AT5G47690">
    <property type="gene designation" value="PDS5A"/>
</dbReference>
<dbReference type="eggNOG" id="KOG1525">
    <property type="taxonomic scope" value="Eukaryota"/>
</dbReference>
<dbReference type="HOGENOM" id="CLU_002325_1_0_1"/>
<dbReference type="InParanoid" id="B6EUB3"/>
<dbReference type="OMA" id="ECYQVRE"/>
<dbReference type="PhylomeDB" id="B6EUB3"/>
<dbReference type="CD-CODE" id="4299E36E">
    <property type="entry name" value="Nucleolus"/>
</dbReference>
<dbReference type="PRO" id="PR:B6EUB3"/>
<dbReference type="Proteomes" id="UP000006548">
    <property type="component" value="Chromosome 5"/>
</dbReference>
<dbReference type="ExpressionAtlas" id="B6EUB3">
    <property type="expression patterns" value="baseline and differential"/>
</dbReference>
<dbReference type="GO" id="GO:0005739">
    <property type="term" value="C:mitochondrion"/>
    <property type="evidence" value="ECO:0007005"/>
    <property type="project" value="TAIR"/>
</dbReference>
<dbReference type="GO" id="GO:0005634">
    <property type="term" value="C:nucleus"/>
    <property type="evidence" value="ECO:0007669"/>
    <property type="project" value="UniProtKB-SubCell"/>
</dbReference>
<dbReference type="GO" id="GO:0009536">
    <property type="term" value="C:plastid"/>
    <property type="evidence" value="ECO:0007005"/>
    <property type="project" value="TAIR"/>
</dbReference>
<dbReference type="GO" id="GO:0051301">
    <property type="term" value="P:cell division"/>
    <property type="evidence" value="ECO:0007669"/>
    <property type="project" value="UniProtKB-KW"/>
</dbReference>
<dbReference type="GO" id="GO:0006310">
    <property type="term" value="P:DNA recombination"/>
    <property type="evidence" value="ECO:0000315"/>
    <property type="project" value="UniProtKB"/>
</dbReference>
<dbReference type="GO" id="GO:0006281">
    <property type="term" value="P:DNA repair"/>
    <property type="evidence" value="ECO:0000315"/>
    <property type="project" value="UniProtKB"/>
</dbReference>
<dbReference type="GO" id="GO:0035825">
    <property type="term" value="P:homologous recombination"/>
    <property type="evidence" value="ECO:0000315"/>
    <property type="project" value="UniProtKB"/>
</dbReference>
<dbReference type="GO" id="GO:0009556">
    <property type="term" value="P:microsporogenesis"/>
    <property type="evidence" value="ECO:0000316"/>
    <property type="project" value="TAIR"/>
</dbReference>
<dbReference type="GO" id="GO:0007064">
    <property type="term" value="P:mitotic sister chromatid cohesion"/>
    <property type="evidence" value="ECO:0000315"/>
    <property type="project" value="UniProtKB"/>
</dbReference>
<dbReference type="CDD" id="cd19953">
    <property type="entry name" value="PDS5"/>
    <property type="match status" value="1"/>
</dbReference>
<dbReference type="CDD" id="cd20404">
    <property type="entry name" value="Tudor_Agenet_AtEML-like"/>
    <property type="match status" value="1"/>
</dbReference>
<dbReference type="FunFam" id="2.30.30.140:FF:000033">
    <property type="entry name" value="Binding protein"/>
    <property type="match status" value="1"/>
</dbReference>
<dbReference type="FunFam" id="1.25.10.10:FF:000420">
    <property type="entry name" value="Sister chromatid cohesion protein PDS5 isogeny B"/>
    <property type="match status" value="1"/>
</dbReference>
<dbReference type="Gene3D" id="2.30.30.140">
    <property type="match status" value="1"/>
</dbReference>
<dbReference type="Gene3D" id="1.25.10.10">
    <property type="entry name" value="Leucine-rich Repeat Variant"/>
    <property type="match status" value="2"/>
</dbReference>
<dbReference type="InterPro" id="IPR011989">
    <property type="entry name" value="ARM-like"/>
</dbReference>
<dbReference type="InterPro" id="IPR016024">
    <property type="entry name" value="ARM-type_fold"/>
</dbReference>
<dbReference type="InterPro" id="IPR039776">
    <property type="entry name" value="Pds5"/>
</dbReference>
<dbReference type="PANTHER" id="PTHR12663">
    <property type="entry name" value="ANDROGEN INDUCED INHIBITOR OF PROLIFERATION AS3 / PDS5-RELATED"/>
    <property type="match status" value="1"/>
</dbReference>
<dbReference type="PANTHER" id="PTHR12663:SF0">
    <property type="entry name" value="PRECOCIOUS DISSOCIATION OF SISTERS 5, ISOFORM A"/>
    <property type="match status" value="1"/>
</dbReference>
<dbReference type="Pfam" id="PF20168">
    <property type="entry name" value="PDS5"/>
    <property type="match status" value="1"/>
</dbReference>
<dbReference type="SUPFAM" id="SSF48371">
    <property type="entry name" value="ARM repeat"/>
    <property type="match status" value="1"/>
</dbReference>
<dbReference type="SUPFAM" id="SSF63748">
    <property type="entry name" value="Tudor/PWWP/MBT"/>
    <property type="match status" value="1"/>
</dbReference>
<name>PDS5A_ARATH</name>